<proteinExistence type="inferred from homology"/>
<feature type="chain" id="PRO_1000137174" description="Regulatory protein RecX">
    <location>
        <begin position="1"/>
        <end position="264"/>
    </location>
</feature>
<comment type="function">
    <text evidence="1">Modulates RecA activity.</text>
</comment>
<comment type="subcellular location">
    <subcellularLocation>
        <location evidence="1">Cytoplasm</location>
    </subcellularLocation>
</comment>
<comment type="similarity">
    <text evidence="1">Belongs to the RecX family.</text>
</comment>
<reference key="1">
    <citation type="submission" date="2008-06" db="EMBL/GenBank/DDBJ databases">
        <title>Lactobacillus casei BL23 complete genome sequence.</title>
        <authorList>
            <person name="Maze A."/>
            <person name="Boel G."/>
            <person name="Bourand A."/>
            <person name="Loux V."/>
            <person name="Gibrat J.F."/>
            <person name="Zuniga M."/>
            <person name="Hartke A."/>
            <person name="Deutscher J."/>
        </authorList>
    </citation>
    <scope>NUCLEOTIDE SEQUENCE [LARGE SCALE GENOMIC DNA]</scope>
    <source>
        <strain>BL23</strain>
    </source>
</reference>
<protein>
    <recommendedName>
        <fullName evidence="1">Regulatory protein RecX</fullName>
    </recommendedName>
</protein>
<name>RECX_LACCB</name>
<sequence length="264" mass="29945">MSEITKITAQKRRGRYNIFIDGTYAFPVSETTLVDYRLAKGMVLTAETVAQIKSSEVTAMGLEIGLTYISHQSRTSKEVSDRLAKEDLPADVIQKVLTRLTDLGFLDDADYAHRYIEEHLKMGELGPRTLQHKLQQKGLKPDLLANELAAIPTTAWLDAAVRAGQKNLRHHQHRAYKDQLQRLRVALMQKGFDDTTIQTAIATIDPQPDPEAESDLLKLEAAKQWRLKAKYDDRERKQKVKTTLFRKGFDVEAIDEVLDDLAES</sequence>
<evidence type="ECO:0000255" key="1">
    <source>
        <dbReference type="HAMAP-Rule" id="MF_01114"/>
    </source>
</evidence>
<organism>
    <name type="scientific">Lacticaseibacillus casei (strain BL23)</name>
    <name type="common">Lactobacillus casei</name>
    <dbReference type="NCBI Taxonomy" id="543734"/>
    <lineage>
        <taxon>Bacteria</taxon>
        <taxon>Bacillati</taxon>
        <taxon>Bacillota</taxon>
        <taxon>Bacilli</taxon>
        <taxon>Lactobacillales</taxon>
        <taxon>Lactobacillaceae</taxon>
        <taxon>Lacticaseibacillus</taxon>
    </lineage>
</organism>
<gene>
    <name evidence="1" type="primary">recX</name>
    <name type="ordered locus">LCABL_19900</name>
</gene>
<dbReference type="EMBL" id="FM177140">
    <property type="protein sequence ID" value="CAQ67068.1"/>
    <property type="molecule type" value="Genomic_DNA"/>
</dbReference>
<dbReference type="SMR" id="B3WFB7"/>
<dbReference type="KEGG" id="lcb:LCABL_19900"/>
<dbReference type="HOGENOM" id="CLU_066607_4_0_9"/>
<dbReference type="GO" id="GO:0005737">
    <property type="term" value="C:cytoplasm"/>
    <property type="evidence" value="ECO:0007669"/>
    <property type="project" value="UniProtKB-SubCell"/>
</dbReference>
<dbReference type="GO" id="GO:0006282">
    <property type="term" value="P:regulation of DNA repair"/>
    <property type="evidence" value="ECO:0007669"/>
    <property type="project" value="UniProtKB-UniRule"/>
</dbReference>
<dbReference type="Gene3D" id="1.10.10.10">
    <property type="entry name" value="Winged helix-like DNA-binding domain superfamily/Winged helix DNA-binding domain"/>
    <property type="match status" value="4"/>
</dbReference>
<dbReference type="HAMAP" id="MF_01114">
    <property type="entry name" value="RecX"/>
    <property type="match status" value="1"/>
</dbReference>
<dbReference type="InterPro" id="IPR053926">
    <property type="entry name" value="RecX_HTH_1st"/>
</dbReference>
<dbReference type="InterPro" id="IPR053924">
    <property type="entry name" value="RecX_HTH_2nd"/>
</dbReference>
<dbReference type="InterPro" id="IPR053925">
    <property type="entry name" value="RecX_HTH_3rd"/>
</dbReference>
<dbReference type="InterPro" id="IPR003783">
    <property type="entry name" value="Regulatory_RecX"/>
</dbReference>
<dbReference type="InterPro" id="IPR036388">
    <property type="entry name" value="WH-like_DNA-bd_sf"/>
</dbReference>
<dbReference type="NCBIfam" id="NF010733">
    <property type="entry name" value="PRK14135.1"/>
    <property type="match status" value="1"/>
</dbReference>
<dbReference type="PANTHER" id="PTHR33602">
    <property type="entry name" value="REGULATORY PROTEIN RECX FAMILY PROTEIN"/>
    <property type="match status" value="1"/>
</dbReference>
<dbReference type="PANTHER" id="PTHR33602:SF1">
    <property type="entry name" value="REGULATORY PROTEIN RECX FAMILY PROTEIN"/>
    <property type="match status" value="1"/>
</dbReference>
<dbReference type="Pfam" id="PF21982">
    <property type="entry name" value="RecX_HTH1"/>
    <property type="match status" value="1"/>
</dbReference>
<dbReference type="Pfam" id="PF02631">
    <property type="entry name" value="RecX_HTH2"/>
    <property type="match status" value="1"/>
</dbReference>
<dbReference type="Pfam" id="PF21981">
    <property type="entry name" value="RecX_HTH3"/>
    <property type="match status" value="1"/>
</dbReference>
<accession>B3WFB7</accession>
<keyword id="KW-0963">Cytoplasm</keyword>